<evidence type="ECO:0000305" key="1"/>
<keyword id="KW-0229">DNA integration</keyword>
<keyword id="KW-0233">DNA recombination</keyword>
<keyword id="KW-1185">Reference proteome</keyword>
<keyword id="KW-1179">Viral genome integration</keyword>
<keyword id="KW-1160">Virus entry into host cell</keyword>
<sequence>MVVTTSDVVMCQMRHSDVQGVYRVYGSWMAENFQDQVSISNQIMSKFAPSMPHAVRSDVINNRLHNLYLHAHYFLICRHQLITHLNPHLHRN</sequence>
<protein>
    <recommendedName>
        <fullName>Putative lambdoid prophage defective integrase</fullName>
    </recommendedName>
</protein>
<feature type="chain" id="PRO_0000252142" description="Putative lambdoid prophage defective integrase">
    <location>
        <begin position="1"/>
        <end position="92"/>
    </location>
</feature>
<comment type="similarity">
    <text evidence="1">Belongs to the 'phage' integrase family.</text>
</comment>
<dbReference type="EMBL" id="AE005174">
    <property type="protein sequence ID" value="AAG56951.1"/>
    <property type="molecule type" value="Genomic_DNA"/>
</dbReference>
<dbReference type="EMBL" id="BA000007">
    <property type="protein sequence ID" value="BAB36098.1"/>
    <property type="molecule type" value="Genomic_DNA"/>
</dbReference>
<dbReference type="PIR" id="C85811">
    <property type="entry name" value="C85811"/>
</dbReference>
<dbReference type="PIR" id="C90963">
    <property type="entry name" value="C90963"/>
</dbReference>
<dbReference type="RefSeq" id="NP_310702.1">
    <property type="nucleotide sequence ID" value="NC_002695.1"/>
</dbReference>
<dbReference type="STRING" id="155864.Z3024"/>
<dbReference type="KEGG" id="ece:Z3024"/>
<dbReference type="HOGENOM" id="CLU_177643_0_0_6"/>
<dbReference type="Proteomes" id="UP000000558">
    <property type="component" value="Chromosome"/>
</dbReference>
<dbReference type="Proteomes" id="UP000002519">
    <property type="component" value="Chromosome"/>
</dbReference>
<dbReference type="GO" id="GO:0015074">
    <property type="term" value="P:DNA integration"/>
    <property type="evidence" value="ECO:0007669"/>
    <property type="project" value="UniProtKB-KW"/>
</dbReference>
<dbReference type="GO" id="GO:0006310">
    <property type="term" value="P:DNA recombination"/>
    <property type="evidence" value="ECO:0007669"/>
    <property type="project" value="UniProtKB-KW"/>
</dbReference>
<dbReference type="GO" id="GO:0075713">
    <property type="term" value="P:establishment of integrated proviral latency"/>
    <property type="evidence" value="ECO:0007669"/>
    <property type="project" value="UniProtKB-KW"/>
</dbReference>
<dbReference type="GO" id="GO:0046718">
    <property type="term" value="P:symbiont entry into host cell"/>
    <property type="evidence" value="ECO:0007669"/>
    <property type="project" value="UniProtKB-KW"/>
</dbReference>
<dbReference type="GO" id="GO:0044826">
    <property type="term" value="P:viral genome integration into host DNA"/>
    <property type="evidence" value="ECO:0007669"/>
    <property type="project" value="UniProtKB-KW"/>
</dbReference>
<gene>
    <name type="primary">intG</name>
    <name type="ordered locus">Z3024</name>
    <name type="ordered locus">ECs2675</name>
</gene>
<accession>Q8XBB1</accession>
<accession>Q7ACZ6</accession>
<organism>
    <name type="scientific">Escherichia coli O157:H7</name>
    <dbReference type="NCBI Taxonomy" id="83334"/>
    <lineage>
        <taxon>Bacteria</taxon>
        <taxon>Pseudomonadati</taxon>
        <taxon>Pseudomonadota</taxon>
        <taxon>Gammaproteobacteria</taxon>
        <taxon>Enterobacterales</taxon>
        <taxon>Enterobacteriaceae</taxon>
        <taxon>Escherichia</taxon>
    </lineage>
</organism>
<reference key="1">
    <citation type="journal article" date="2001" name="Nature">
        <title>Genome sequence of enterohaemorrhagic Escherichia coli O157:H7.</title>
        <authorList>
            <person name="Perna N.T."/>
            <person name="Plunkett G. III"/>
            <person name="Burland V."/>
            <person name="Mau B."/>
            <person name="Glasner J.D."/>
            <person name="Rose D.J."/>
            <person name="Mayhew G.F."/>
            <person name="Evans P.S."/>
            <person name="Gregor J."/>
            <person name="Kirkpatrick H.A."/>
            <person name="Posfai G."/>
            <person name="Hackett J."/>
            <person name="Klink S."/>
            <person name="Boutin A."/>
            <person name="Shao Y."/>
            <person name="Miller L."/>
            <person name="Grotbeck E.J."/>
            <person name="Davis N.W."/>
            <person name="Lim A."/>
            <person name="Dimalanta E.T."/>
            <person name="Potamousis K."/>
            <person name="Apodaca J."/>
            <person name="Anantharaman T.S."/>
            <person name="Lin J."/>
            <person name="Yen G."/>
            <person name="Schwartz D.C."/>
            <person name="Welch R.A."/>
            <person name="Blattner F.R."/>
        </authorList>
    </citation>
    <scope>NUCLEOTIDE SEQUENCE [LARGE SCALE GENOMIC DNA]</scope>
    <source>
        <strain>O157:H7 / EDL933 / ATCC 700927 / EHEC</strain>
    </source>
</reference>
<reference key="2">
    <citation type="journal article" date="2001" name="DNA Res.">
        <title>Complete genome sequence of enterohemorrhagic Escherichia coli O157:H7 and genomic comparison with a laboratory strain K-12.</title>
        <authorList>
            <person name="Hayashi T."/>
            <person name="Makino K."/>
            <person name="Ohnishi M."/>
            <person name="Kurokawa K."/>
            <person name="Ishii K."/>
            <person name="Yokoyama K."/>
            <person name="Han C.-G."/>
            <person name="Ohtsubo E."/>
            <person name="Nakayama K."/>
            <person name="Murata T."/>
            <person name="Tanaka M."/>
            <person name="Tobe T."/>
            <person name="Iida T."/>
            <person name="Takami H."/>
            <person name="Honda T."/>
            <person name="Sasakawa C."/>
            <person name="Ogasawara N."/>
            <person name="Yasunaga T."/>
            <person name="Kuhara S."/>
            <person name="Shiba T."/>
            <person name="Hattori M."/>
            <person name="Shinagawa H."/>
        </authorList>
    </citation>
    <scope>NUCLEOTIDE SEQUENCE [LARGE SCALE GENOMIC DNA]</scope>
    <source>
        <strain>O157:H7 / Sakai / RIMD 0509952 / EHEC</strain>
    </source>
</reference>
<proteinExistence type="inferred from homology"/>
<name>INTG_ECO57</name>